<keyword id="KW-0002">3D-structure</keyword>
<keyword id="KW-0051">Antiviral defense</keyword>
<keyword id="KW-0175">Coiled coil</keyword>
<keyword id="KW-0238">DNA-binding</keyword>
<keyword id="KW-0479">Metal-binding</keyword>
<keyword id="KW-0694">RNA-binding</keyword>
<keyword id="KW-0804">Transcription</keyword>
<keyword id="KW-0805">Transcription regulation</keyword>
<keyword id="KW-0862">Zinc</keyword>
<dbReference type="EMBL" id="LSKA01000495">
    <property type="status" value="NOT_ANNOTATED_CDS"/>
    <property type="molecule type" value="Genomic_DNA"/>
</dbReference>
<dbReference type="RefSeq" id="WP_061006603.1">
    <property type="nucleotide sequence ID" value="NZ_LSKL01000323.1"/>
</dbReference>
<dbReference type="PDB" id="8HHL">
    <property type="method" value="EM"/>
    <property type="resolution" value="2.87 A"/>
    <property type="chains" value="A=1-592"/>
</dbReference>
<dbReference type="PDB" id="8HHM">
    <property type="method" value="EM"/>
    <property type="resolution" value="3.08 A"/>
    <property type="chains" value="A=1-592"/>
</dbReference>
<dbReference type="PDB" id="8HIO">
    <property type="method" value="EM"/>
    <property type="resolution" value="3.73 A"/>
    <property type="chains" value="A/B=1-592"/>
</dbReference>
<dbReference type="PDBsum" id="8HHL"/>
<dbReference type="PDBsum" id="8HHM"/>
<dbReference type="PDBsum" id="8HIO"/>
<dbReference type="EMDB" id="EMD-34824"/>
<dbReference type="SMR" id="P0DXB1"/>
<dbReference type="GO" id="GO:0003677">
    <property type="term" value="F:DNA binding"/>
    <property type="evidence" value="ECO:0007669"/>
    <property type="project" value="UniProtKB-KW"/>
</dbReference>
<dbReference type="GO" id="GO:0046872">
    <property type="term" value="F:metal ion binding"/>
    <property type="evidence" value="ECO:0007669"/>
    <property type="project" value="UniProtKB-KW"/>
</dbReference>
<dbReference type="GO" id="GO:0003723">
    <property type="term" value="F:RNA binding"/>
    <property type="evidence" value="ECO:0007669"/>
    <property type="project" value="UniProtKB-KW"/>
</dbReference>
<dbReference type="GO" id="GO:0051607">
    <property type="term" value="P:defense response to virus"/>
    <property type="evidence" value="ECO:0007669"/>
    <property type="project" value="UniProtKB-KW"/>
</dbReference>
<feature type="chain" id="PRO_0000460484" description="CRISPR-associated DNA-binding protein Cas12m">
    <location>
        <begin position="1"/>
        <end position="596"/>
    </location>
</feature>
<feature type="region of interest" description="Recognition domain (REC1-N)" evidence="2">
    <location>
        <begin position="19"/>
        <end position="53"/>
    </location>
</feature>
<feature type="region of interest" description="Recognition domain (REC2)" evidence="2">
    <location>
        <begin position="54"/>
        <end position="121"/>
    </location>
</feature>
<feature type="region of interest" description="Recognition domain (REC1-C)" evidence="2">
    <location>
        <begin position="122"/>
        <end position="190"/>
    </location>
</feature>
<feature type="region of interest" description="Wedge domain (WED)" evidence="2">
    <location>
        <begin position="191"/>
        <end position="302"/>
    </location>
</feature>
<feature type="region of interest" description="Linker" evidence="2">
    <location>
        <begin position="303"/>
        <end position="313"/>
    </location>
</feature>
<feature type="region of interest" description="RuvC-I" evidence="2">
    <location>
        <begin position="314"/>
        <end position="541"/>
    </location>
</feature>
<feature type="region of interest" description="Target nucleic-acid binding (TNB)" evidence="2">
    <location>
        <begin position="541"/>
        <end position="577"/>
    </location>
</feature>
<feature type="region of interest" description="RuvC-II" evidence="2">
    <location>
        <begin position="578"/>
        <end position="596"/>
    </location>
</feature>
<feature type="coiled-coil region" evidence="2 7 9">
    <location>
        <begin position="55"/>
        <end position="83"/>
    </location>
</feature>
<feature type="coiled-coil region" evidence="2 7 9">
    <location>
        <begin position="91"/>
        <end position="117"/>
    </location>
</feature>
<feature type="binding site" evidence="2 7">
    <location>
        <position position="317"/>
    </location>
    <ligand>
        <name>Mg(2+)</name>
        <dbReference type="ChEBI" id="CHEBI:18420"/>
    </ligand>
</feature>
<feature type="binding site" evidence="2 7 8 9">
    <location>
        <position position="549"/>
    </location>
    <ligand>
        <name>Zn(2+)</name>
        <dbReference type="ChEBI" id="CHEBI:29105"/>
    </ligand>
</feature>
<feature type="binding site" evidence="2 7 8 9">
    <location>
        <position position="552"/>
    </location>
    <ligand>
        <name>Zn(2+)</name>
        <dbReference type="ChEBI" id="CHEBI:29105"/>
    </ligand>
</feature>
<feature type="binding site" evidence="2 7 8 9">
    <location>
        <position position="569"/>
    </location>
    <ligand>
        <name>Zn(2+)</name>
        <dbReference type="ChEBI" id="CHEBI:29105"/>
    </ligand>
</feature>
<feature type="binding site" evidence="2 7 8 9">
    <location>
        <position position="572"/>
    </location>
    <ligand>
        <name>Zn(2+)</name>
        <dbReference type="ChEBI" id="CHEBI:29105"/>
    </ligand>
</feature>
<feature type="binding site" evidence="2 7">
    <location>
        <position position="579"/>
    </location>
    <ligand>
        <name>Mg(2+)</name>
        <dbReference type="ChEBI" id="CHEBI:18420"/>
    </ligand>
</feature>
<feature type="mutagenesis site" description="Less than 10% of target DNA-binding in vitro, in vivo no change in silencing when crRNA targets a reporter gene promoter, strong disruption of silencing when cRNA targets downstream of reporter genes. Loss of target DNA-binding, disruption of all gene silencing; when associated with A-112 and A-126." evidence="2">
    <original>R</original>
    <variation>A</variation>
    <location>
        <position position="111"/>
    </location>
</feature>
<feature type="mutagenesis site" description="Less than 10% of target DNA-binding in vitro, in vivo no change in silencing when crRNA targets a reporter gene promoter, strong disruption of silencing when cRNA targets downstream of reporter genes. Loss of target DNA-binding, disruption of all gene silencing; when associated with A-111 and A-126." evidence="2">
    <original>R</original>
    <variation>A</variation>
    <location>
        <position position="112"/>
    </location>
</feature>
<feature type="mutagenesis site" description="Less than 10% of target DNA-binding in vitro, in vivo no change in silencing when crRNA targets a reporter gene promoter, strong disruption of silencing when cRNA targets downstream of reporter genes. Loss of target DNA-binding, disruption of all gene silencing; when associated with A-111 and A-112." evidence="2">
    <original>R</original>
    <variation>A</variation>
    <location>
        <position position="126"/>
    </location>
</feature>
<feature type="mutagenesis site" description="Loss of target DNA-binding in vitro." evidence="2">
    <original>Y</original>
    <variation>A</variation>
    <location>
        <position position="141"/>
    </location>
</feature>
<feature type="mutagenesis site" description="Loss of target DNA-binding in vitro." evidence="2">
    <original>W</original>
    <variation>A</variation>
    <location>
        <position position="152"/>
    </location>
</feature>
<feature type="mutagenesis site" description="Less than 10% of target DNA-binding in vitro." evidence="2">
    <original>N</original>
    <variation>A</variation>
    <location>
        <position position="156"/>
    </location>
</feature>
<feature type="mutagenesis site" description="Less than 10% of target DNA-binding in vitro." evidence="2">
    <original>Q</original>
    <variation>A</variation>
    <location>
        <position position="195"/>
    </location>
</feature>
<feature type="mutagenesis site" description="Less than 10% of target DNA-binding in vitro." evidence="2">
    <original>Q</original>
    <variation>A</variation>
    <location>
        <position position="197"/>
    </location>
</feature>
<feature type="mutagenesis site" description="No longer silences genes, no change in pre-crRNA processing." evidence="1 2">
    <original>HR</original>
    <variation>AA</variation>
    <location>
        <begin position="269"/>
        <end position="270"/>
    </location>
</feature>
<feature type="mutagenesis site" description="Loss of plasmid silencing in vivo, no change in pre-crRNA processing in vitro, decreased target DNA-binding in vitro, in vivo no change in silencing when crRNA targets a reporter gene promoter, strong disruption of silencing when cRNA targets downstream of reporter genes." evidence="1 2">
    <original>D</original>
    <variation>A</variation>
    <location>
        <position position="485"/>
    </location>
</feature>
<feature type="mutagenesis site" description="No change in silencing when crRNA targets a reporter gene promoter, strong disruption of silencing when cRNA targets downstream in reporter genes, decreased target DNA-binding." evidence="1">
    <original>HSRC</original>
    <variation>ASRA</variation>
    <location>
        <begin position="549"/>
        <end position="552"/>
    </location>
</feature>
<feature type="strand" evidence="10">
    <location>
        <begin position="3"/>
        <end position="11"/>
    </location>
</feature>
<feature type="helix" evidence="10">
    <location>
        <begin position="19"/>
        <end position="51"/>
    </location>
</feature>
<feature type="helix" evidence="10">
    <location>
        <begin position="54"/>
        <end position="84"/>
    </location>
</feature>
<feature type="helix" evidence="10">
    <location>
        <begin position="91"/>
        <end position="117"/>
    </location>
</feature>
<feature type="helix" evidence="10">
    <location>
        <begin position="120"/>
        <end position="122"/>
    </location>
</feature>
<feature type="helix" evidence="10">
    <location>
        <begin position="123"/>
        <end position="144"/>
    </location>
</feature>
<feature type="strand" evidence="10">
    <location>
        <begin position="147"/>
        <end position="149"/>
    </location>
</feature>
<feature type="helix" evidence="10">
    <location>
        <begin position="152"/>
        <end position="175"/>
    </location>
</feature>
<feature type="strand" evidence="10">
    <location>
        <begin position="190"/>
        <end position="195"/>
    </location>
</feature>
<feature type="helix" evidence="10">
    <location>
        <begin position="207"/>
        <end position="210"/>
    </location>
</feature>
<feature type="turn" evidence="10">
    <location>
        <begin position="216"/>
        <end position="220"/>
    </location>
</feature>
<feature type="helix" evidence="10">
    <location>
        <begin position="229"/>
        <end position="232"/>
    </location>
</feature>
<feature type="helix" evidence="10">
    <location>
        <begin position="237"/>
        <end position="243"/>
    </location>
</feature>
<feature type="strand" evidence="10">
    <location>
        <begin position="245"/>
        <end position="255"/>
    </location>
</feature>
<feature type="strand" evidence="10">
    <location>
        <begin position="258"/>
        <end position="267"/>
    </location>
</feature>
<feature type="strand" evidence="10">
    <location>
        <begin position="278"/>
        <end position="288"/>
    </location>
</feature>
<feature type="strand" evidence="10">
    <location>
        <begin position="291"/>
        <end position="302"/>
    </location>
</feature>
<feature type="strand" evidence="10">
    <location>
        <begin position="313"/>
        <end position="323"/>
    </location>
</feature>
<feature type="strand" evidence="10">
    <location>
        <begin position="326"/>
        <end position="336"/>
    </location>
</feature>
<feature type="helix" evidence="10">
    <location>
        <begin position="342"/>
        <end position="344"/>
    </location>
</feature>
<feature type="turn" evidence="10">
    <location>
        <begin position="345"/>
        <end position="347"/>
    </location>
</feature>
<feature type="strand" evidence="10">
    <location>
        <begin position="352"/>
        <end position="360"/>
    </location>
</feature>
<feature type="helix" evidence="10">
    <location>
        <begin position="363"/>
        <end position="396"/>
    </location>
</feature>
<feature type="strand" evidence="10">
    <location>
        <begin position="402"/>
        <end position="405"/>
    </location>
</feature>
<feature type="helix" evidence="10">
    <location>
        <begin position="409"/>
        <end position="413"/>
    </location>
</feature>
<feature type="helix" evidence="10">
    <location>
        <begin position="418"/>
        <end position="427"/>
    </location>
</feature>
<feature type="helix" evidence="10">
    <location>
        <begin position="428"/>
        <end position="430"/>
    </location>
</feature>
<feature type="helix" evidence="10">
    <location>
        <begin position="435"/>
        <end position="478"/>
    </location>
</feature>
<feature type="strand" evidence="10">
    <location>
        <begin position="480"/>
        <end position="485"/>
    </location>
</feature>
<feature type="helix" evidence="10">
    <location>
        <begin position="489"/>
        <end position="499"/>
    </location>
</feature>
<feature type="helix" evidence="10">
    <location>
        <begin position="504"/>
        <end position="517"/>
    </location>
</feature>
<feature type="helix" evidence="10">
    <location>
        <begin position="519"/>
        <end position="533"/>
    </location>
</feature>
<feature type="strand" evidence="10">
    <location>
        <begin position="537"/>
        <end position="540"/>
    </location>
</feature>
<feature type="turn" evidence="11">
    <location>
        <begin position="543"/>
        <end position="547"/>
    </location>
</feature>
<feature type="turn" evidence="10">
    <location>
        <begin position="550"/>
        <end position="552"/>
    </location>
</feature>
<feature type="helix" evidence="10">
    <location>
        <begin position="561"/>
        <end position="563"/>
    </location>
</feature>
<feature type="strand" evidence="10">
    <location>
        <begin position="564"/>
        <end position="568"/>
    </location>
</feature>
<feature type="strand" evidence="10">
    <location>
        <begin position="570"/>
        <end position="572"/>
    </location>
</feature>
<feature type="strand" evidence="11">
    <location>
        <begin position="574"/>
        <end position="576"/>
    </location>
</feature>
<feature type="helix" evidence="10">
    <location>
        <begin position="580"/>
        <end position="590"/>
    </location>
</feature>
<protein>
    <recommendedName>
        <fullName evidence="4">CRISPR-associated DNA-binding protein Cas12m</fullName>
        <shortName evidence="5">MmCas12m</shortName>
    </recommendedName>
</protein>
<accession>P0DXB1</accession>
<sequence length="596" mass="66245">MTTMTVHTMGVHYKWQIPEVLRQQLWLAHNLREDLVSLQLAYDDDLKAIWSSYPDVAQAEDTMAAAEADAVALSERVKQARIEARSKKISTELTQQLRDAKKRLKDARQARRDAIAVVKDDAAERRKARSDQLAADQKALYGQYCRDGDLYWASFNTVLDHHKTAVKRIAAQRASGKPATLRHHRFDGSGTIAVQLQRQAGAPPRTPMVLADEAGKYRNVLHIPGWTDPDVWEQMTRSQCRQSGRVTVRMRCGSTDGQPQWIDLPVQVHRWLPADADITGAELVVTRVAGIYRAKLCVTARIGDTEPVTSGPTVALHLGWRSTEEGTAVATWRSDAPLDIPFGLRTVMRVDAAGTSGIIVVPATIERRLTRTENIASSRSLALDALRDKVVGWLSDNDAPTYRDAPLEAATVKQWKSPQRFASLAHAWKDNGTEISDILWAWFSLDRKQWAQQENGRRKALGHRDDLYRQIAAVISDQAGHVLVDDTSVAELSARAMERTELPTEVQQKIDRRRDHAAPGGLRASVVAAMTRDGVPVTIVAAADFTRTHSRCGHVNPADDRYLSNPVRCDGCGAMYDQDRSFVTLMLRAATAPSNP</sequence>
<evidence type="ECO:0000269" key="1">
    <source>
    </source>
</evidence>
<evidence type="ECO:0000269" key="2">
    <source>
    </source>
</evidence>
<evidence type="ECO:0000269" key="3">
    <source>
    </source>
</evidence>
<evidence type="ECO:0000303" key="4">
    <source>
    </source>
</evidence>
<evidence type="ECO:0000303" key="5">
    <source>
    </source>
</evidence>
<evidence type="ECO:0000305" key="6">
    <source>
    </source>
</evidence>
<evidence type="ECO:0007744" key="7">
    <source>
        <dbReference type="PDB" id="8HHL"/>
    </source>
</evidence>
<evidence type="ECO:0007744" key="8">
    <source>
        <dbReference type="PDB" id="8HHM"/>
    </source>
</evidence>
<evidence type="ECO:0007744" key="9">
    <source>
        <dbReference type="PDB" id="8HIO"/>
    </source>
</evidence>
<evidence type="ECO:0007829" key="10">
    <source>
        <dbReference type="PDB" id="8HHL"/>
    </source>
</evidence>
<evidence type="ECO:0007829" key="11">
    <source>
        <dbReference type="PDB" id="8HHM"/>
    </source>
</evidence>
<proteinExistence type="evidence at protein level"/>
<organism>
    <name type="scientific">Mycolicibacterium mucogenicum</name>
    <name type="common">Mycobacterium mucogenicum</name>
    <dbReference type="NCBI Taxonomy" id="56689"/>
    <lineage>
        <taxon>Bacteria</taxon>
        <taxon>Bacillati</taxon>
        <taxon>Actinomycetota</taxon>
        <taxon>Actinomycetes</taxon>
        <taxon>Mycobacteriales</taxon>
        <taxon>Mycobacteriaceae</taxon>
        <taxon>Mycolicibacterium</taxon>
    </lineage>
</organism>
<name>CS12M_MYCMU</name>
<reference key="1">
    <citation type="journal article" date="2016" name="Appl. Environ. Microbiol.">
        <title>Biofilms on Hospital Shower Hoses: Characterization and Implications for Nosocomial Infections.</title>
        <authorList>
            <person name="Soto-Giron M.J."/>
            <person name="Rodriguez-R L.M."/>
            <person name="Luo C."/>
            <person name="Elk M."/>
            <person name="Ryu H."/>
            <person name="Hoelle J."/>
            <person name="Santo Domingo J.W."/>
            <person name="Konstantinidis K.T."/>
        </authorList>
    </citation>
    <scope>NUCLEOTIDE SEQUENCE [LARGE SCALE GENOMIC DNA]</scope>
    <source>
        <strain>CCH10-A2</strain>
    </source>
</reference>
<reference key="2">
    <citation type="journal article" date="2022" name="Mol. Cell">
        <title>The miniature CRISPR-Cas12m effector binds DNA to block transcription.</title>
        <authorList>
            <person name="Wu W.Y."/>
            <person name="Mohanraju P."/>
            <person name="Liao C."/>
            <person name="Adiego-Perez B."/>
            <person name="Creutzburg S.C.A."/>
            <person name="Makarova K.S."/>
            <person name="Keessen K."/>
            <person name="Lindeboom T.A."/>
            <person name="Khan T.S."/>
            <person name="Prinsen S."/>
            <person name="Joosten R."/>
            <person name="Yan W.X."/>
            <person name="Migur A."/>
            <person name="Laffeber C."/>
            <person name="Scott D.A."/>
            <person name="Lebbink J.H.G."/>
            <person name="Koonin E.V."/>
            <person name="Beisel C.L."/>
            <person name="van der Oost J."/>
        </authorList>
    </citation>
    <scope>FUNCTION IN PLASMID SILENCING</scope>
    <scope>FUNCTION IN GENE SILENCING</scope>
    <scope>FUNCTION IN CRRNA PROCESSING</scope>
    <scope>BIOTECHNOLOGY</scope>
    <scope>DNA-BINDING</scope>
    <scope>RNA-BINDING</scope>
    <scope>MUTAGENESIS OF 269-HIS-ARG-270; ASP-485 AND 549-HIS--CYS-552</scope>
    <source>
        <strain>CCH10-A2</strain>
    </source>
</reference>
<reference key="3">
    <citation type="journal article" date="2024" name="Nucleic Acids Res.">
        <title>Innate programmable DNA binding by CRISPR-Cas12m effectors enable efficient base editing.</title>
        <authorList>
            <person name="Bigelyte G."/>
            <person name="Duchovska B."/>
            <person name="Zedaveinyte R."/>
            <person name="Sasnauskas G."/>
            <person name="Sinkunas T."/>
            <person name="Dalgediene I."/>
            <person name="Tamulaitiene G."/>
            <person name="Silanskas A."/>
            <person name="Kazlauskas D."/>
            <person name="Valancauskas L."/>
            <person name="Madariaga-Marcos J."/>
            <person name="Seidel R."/>
            <person name="Siksnys V."/>
            <person name="Karvelis T."/>
        </authorList>
    </citation>
    <scope>FUNCTION</scope>
    <scope>DNA-BINDING</scope>
    <scope>RNA-BINDING</scope>
    <source>
        <strain>CCH10-A2</strain>
    </source>
</reference>
<reference key="4">
    <citation type="journal article" date="2023" name="Nat. Struct. Mol. Biol.">
        <title>Mechanistic and evolutionary insights into a type V-M CRISPR-Cas effector enzyme.</title>
        <authorList>
            <person name="Omura S.N."/>
            <person name="Nakagawa R."/>
            <person name="Suedfeld C."/>
            <person name="Villegas Warren R."/>
            <person name="Wu W.Y."/>
            <person name="Hirano H."/>
            <person name="Laffeber C."/>
            <person name="Kusakizako T."/>
            <person name="Kise Y."/>
            <person name="Lebbink J.H.G."/>
            <person name="Itoh Y."/>
            <person name="van der Oost J."/>
            <person name="Nureki O."/>
        </authorList>
    </citation>
    <scope>STRUCTURE BY ELECTRON MICROSCOPY (2.87 ANGSTROMS) IN COMPLEX WITH CRRNA WITH AND WITHOUT TARGET DNA; MG(2+) AND ZN(2+)</scope>
    <scope>FUNCTION IN GENE SILENCING</scope>
    <scope>COFACTOR</scope>
    <scope>SUBUNIT</scope>
    <scope>DOMAIN</scope>
    <scope>MUTAGENESIS OF ARG-111; ARG-112; ARG-126; TYR-141; TRP-152; ASN-156; GLN-195; GLN-197; 269-HIS-ARG-270 AND ASP-485</scope>
</reference>
<comment type="function">
    <text evidence="1 2 3">CRISPR (clustered regularly interspaced short palindromic repeat), is an adaptive immune system that provides protection against mobile genetic elements (viruses, transposable elements and conjugative plasmids) (PubMed:36427491). CRISPR clusters contain sequences complementary to antecedent mobile elements and target invading nucleic acids (PubMed:36427491). CRISPR clusters are transcribed and processed into CRISPR RNA (crRNA) (PubMed:36427491). Recognizes a short motif in the CRISPR repeat sequences (the 5' PAM or protospacer adjacent motif, 5'-TTN-3' in this organism) to help distinguish self versus nonself, as targets within the bacterial CRISPR locus do not have PAMs (PubMed:36427491, PubMed:38261981). Upon expression in E.coli as a CRISPR locus inhibits plasmid propagation when targeted to regions essential for plasmid propagation (replication origin and dnaA) (PubMed:36427491). The crRNA-Cas12m complex inhibits transcription from target DNA leading to gene silencing (PubMed:36427491, PubMed:37460897). Cas12m-crRNA binds DNA in a PAM-dependent, crRNA-guided fashion (PubMed:36427491, PubMed:38261981). Binds a 17-bp crRNA-ss-target DNA heteroduplex, in a 56 nucleotide crRNA (PubMed:37460897). No dsDNA, ssDNA or RNA nuclease activity is seen for the crRNA-Cas12m complex (PubMed:36427491). Is required to process pre-crRNA to mature crRNA without a tracrRNA (PubMed:36427491, PubMed:37460897). Upon expression in E.coli as a CRISPR region preferentially binds to its associated crRNA (PubMed:36427491, PubMed:38261981).</text>
</comment>
<comment type="cofactor">
    <cofactor evidence="2 7">
        <name>Mg(2+)</name>
        <dbReference type="ChEBI" id="CHEBI:18420"/>
    </cofactor>
    <text evidence="2">Binds only 1 Mg(2+) as opposed to 2 usually seen in other Cas12 enzymes; lack of the second Mg(2+) results in loss of target DNA cleavage activity (PubMed:37460897).</text>
</comment>
<comment type="cofactor">
    <cofactor evidence="2 7 8 9">
        <name>Zn(2+)</name>
        <dbReference type="ChEBI" id="CHEBI:29105"/>
    </cofactor>
    <text evidence="2">Binds 1 Zn(2+) within the target nucleic-acid binding (TNB) domain (PubMed:37460897).</text>
</comment>
<comment type="subunit">
    <text evidence="2">Binds crRNA and target dsDNA as a monomer (PubMed:37460897).</text>
</comment>
<comment type="domain">
    <text evidence="2">Has a bilobed structure, with a recognition (REC) lobe and nuclease (NUC) lobe (PubMed:37460897). The REC lobe (residues 1-302) is formed by the discontinuous recognition (REC) and wedge (WED) domains, while the NUC lobe (residues 313-596) is formed by the discontinuous RuvC and target nucleic-acid binding (TNB) domains (PubMed:37460897). The crRNA-single-strand target DNA duplex is bound in the central channel between the 2 lobes while the non-target single stranded DNA is bound to pockets in the REC and RuvC domains (PubMed:37460897).</text>
</comment>
<comment type="biotechnology">
    <text evidence="1">Has been repurposed to perform C-to-T base editing by fusion with a cytidine deaminase and a uracil glycolase inhibitor (PubMed:36427491). The small size of this protein may facilitate its delivery by adeno-associated viruses (PubMed:36427491).</text>
</comment>
<comment type="miscellaneous">
    <text evidence="6">Part of a type V-M CRISPR-Cas system.</text>
</comment>
<comment type="similarity">
    <text evidence="4 5">Belongs to the CRISPR-associated DNA-binding protein Cas12m family.</text>
</comment>
<gene>
    <name evidence="4" type="primary">cas12m</name>
</gene>